<protein>
    <recommendedName>
        <fullName>Keratin, type I cytoskeletal 14</fullName>
    </recommendedName>
    <alternativeName>
        <fullName>Cytokeratin-14</fullName>
        <shortName>CK-14</shortName>
    </alternativeName>
    <alternativeName>
        <fullName>Keratin-14</fullName>
        <shortName>K14</shortName>
    </alternativeName>
</protein>
<keyword id="KW-0175">Coiled coil</keyword>
<keyword id="KW-0963">Cytoplasm</keyword>
<keyword id="KW-0903">Direct protein sequencing</keyword>
<keyword id="KW-1015">Disulfide bond</keyword>
<keyword id="KW-0403">Intermediate filament</keyword>
<keyword id="KW-0416">Keratin</keyword>
<keyword id="KW-0539">Nucleus</keyword>
<keyword id="KW-0597">Phosphoprotein</keyword>
<keyword id="KW-1185">Reference proteome</keyword>
<keyword id="KW-0832">Ubl conjugation</keyword>
<evidence type="ECO:0000250" key="1"/>
<evidence type="ECO:0000250" key="2">
    <source>
        <dbReference type="UniProtKB" id="P02533"/>
    </source>
</evidence>
<evidence type="ECO:0000255" key="3">
    <source>
        <dbReference type="PROSITE-ProRule" id="PRU01188"/>
    </source>
</evidence>
<evidence type="ECO:0000256" key="4">
    <source>
        <dbReference type="SAM" id="MobiDB-lite"/>
    </source>
</evidence>
<evidence type="ECO:0000269" key="5">
    <source>
    </source>
</evidence>
<evidence type="ECO:0000269" key="6">
    <source>
    </source>
</evidence>
<evidence type="ECO:0000269" key="7">
    <source>
    </source>
</evidence>
<evidence type="ECO:0000269" key="8">
    <source>
    </source>
</evidence>
<evidence type="ECO:0000269" key="9">
    <source>
    </source>
</evidence>
<evidence type="ECO:0000269" key="10">
    <source>
    </source>
</evidence>
<evidence type="ECO:0000269" key="11">
    <source>
    </source>
</evidence>
<evidence type="ECO:0000269" key="12">
    <source>
    </source>
</evidence>
<evidence type="ECO:0000269" key="13">
    <source>
    </source>
</evidence>
<evidence type="ECO:0000269" key="14">
    <source>
    </source>
</evidence>
<evidence type="ECO:0000305" key="15"/>
<evidence type="ECO:0007744" key="16">
    <source>
    </source>
</evidence>
<gene>
    <name type="primary">Krt14</name>
    <name type="synonym">Krt1-14</name>
</gene>
<organism>
    <name type="scientific">Mus musculus</name>
    <name type="common">Mouse</name>
    <dbReference type="NCBI Taxonomy" id="10090"/>
    <lineage>
        <taxon>Eukaryota</taxon>
        <taxon>Metazoa</taxon>
        <taxon>Chordata</taxon>
        <taxon>Craniata</taxon>
        <taxon>Vertebrata</taxon>
        <taxon>Euteleostomi</taxon>
        <taxon>Mammalia</taxon>
        <taxon>Eutheria</taxon>
        <taxon>Euarchontoglires</taxon>
        <taxon>Glires</taxon>
        <taxon>Rodentia</taxon>
        <taxon>Myomorpha</taxon>
        <taxon>Muroidea</taxon>
        <taxon>Muridae</taxon>
        <taxon>Murinae</taxon>
        <taxon>Mus</taxon>
        <taxon>Mus</taxon>
    </lineage>
</organism>
<feature type="chain" id="PRO_0000063654" description="Keratin, type I cytoskeletal 14">
    <location>
        <begin position="1"/>
        <end position="484"/>
    </location>
</feature>
<feature type="domain" description="IF rod" evidence="3">
    <location>
        <begin position="121"/>
        <end position="432"/>
    </location>
</feature>
<feature type="region of interest" description="Head">
    <location>
        <begin position="1"/>
        <end position="120"/>
    </location>
</feature>
<feature type="region of interest" description="Disordered" evidence="4">
    <location>
        <begin position="1"/>
        <end position="20"/>
    </location>
</feature>
<feature type="region of interest" description="Coil 1A">
    <location>
        <begin position="121"/>
        <end position="156"/>
    </location>
</feature>
<feature type="region of interest" description="Linker 1">
    <location>
        <begin position="157"/>
        <end position="174"/>
    </location>
</feature>
<feature type="region of interest" description="Coil 1B">
    <location>
        <begin position="175"/>
        <end position="266"/>
    </location>
</feature>
<feature type="region of interest" description="Linker 12">
    <location>
        <begin position="267"/>
        <end position="289"/>
    </location>
</feature>
<feature type="region of interest" description="Coil 2">
    <location>
        <begin position="290"/>
        <end position="428"/>
    </location>
</feature>
<feature type="region of interest" description="Tail">
    <location>
        <begin position="429"/>
        <end position="484"/>
    </location>
</feature>
<feature type="region of interest" description="Interaction with Type I keratins and keratin filaments" evidence="1">
    <location>
        <begin position="431"/>
        <end position="484"/>
    </location>
</feature>
<feature type="region of interest" description="Disordered" evidence="4">
    <location>
        <begin position="435"/>
        <end position="457"/>
    </location>
</feature>
<feature type="compositionally biased region" description="Low complexity" evidence="4">
    <location>
        <begin position="435"/>
        <end position="450"/>
    </location>
</feature>
<feature type="site" description="Stutter">
    <location>
        <position position="370"/>
    </location>
</feature>
<feature type="modified residue" description="Phosphoserine" evidence="16">
    <location>
        <position position="447"/>
    </location>
</feature>
<feature type="disulfide bond" description="Interchain" evidence="10">
    <location>
        <position position="373"/>
    </location>
</feature>
<proteinExistence type="evidence at protein level"/>
<dbReference type="EMBL" id="AL590873">
    <property type="status" value="NOT_ANNOTATED_CDS"/>
    <property type="molecule type" value="Genomic_DNA"/>
</dbReference>
<dbReference type="EMBL" id="BC003325">
    <property type="protein sequence ID" value="AAH03325.1"/>
    <property type="status" value="ALT_INIT"/>
    <property type="molecule type" value="mRNA"/>
</dbReference>
<dbReference type="EMBL" id="BC011074">
    <property type="protein sequence ID" value="AAH11074.1"/>
    <property type="molecule type" value="mRNA"/>
</dbReference>
<dbReference type="EMBL" id="M13806">
    <property type="protein sequence ID" value="AAA39392.1"/>
    <property type="molecule type" value="mRNA"/>
</dbReference>
<dbReference type="CCDS" id="CCDS25413.1"/>
<dbReference type="PIR" id="B26135">
    <property type="entry name" value="B26135"/>
</dbReference>
<dbReference type="RefSeq" id="NP_001300886.1">
    <property type="nucleotide sequence ID" value="NM_001313957.1"/>
</dbReference>
<dbReference type="RefSeq" id="NP_058654.1">
    <property type="nucleotide sequence ID" value="NM_016958.2"/>
</dbReference>
<dbReference type="SMR" id="Q61781"/>
<dbReference type="BioGRID" id="201019">
    <property type="interactions" value="15"/>
</dbReference>
<dbReference type="ComplexPortal" id="CPX-5867">
    <property type="entry name" value="Keratin-5 - Keratin-14 dimer complex"/>
</dbReference>
<dbReference type="FunCoup" id="Q61781">
    <property type="interactions" value="182"/>
</dbReference>
<dbReference type="IntAct" id="Q61781">
    <property type="interactions" value="3"/>
</dbReference>
<dbReference type="MINT" id="Q61781"/>
<dbReference type="STRING" id="10090.ENSMUSP00000007272"/>
<dbReference type="iPTMnet" id="Q61781"/>
<dbReference type="PhosphoSitePlus" id="Q61781"/>
<dbReference type="SwissPalm" id="Q61781"/>
<dbReference type="CPTAC" id="non-CPTAC-3833"/>
<dbReference type="jPOST" id="Q61781"/>
<dbReference type="PaxDb" id="10090-ENSMUSP00000007272"/>
<dbReference type="PeptideAtlas" id="Q61781"/>
<dbReference type="ProteomicsDB" id="269442"/>
<dbReference type="Antibodypedia" id="3600">
    <property type="antibodies" value="1455 antibodies from 51 providers"/>
</dbReference>
<dbReference type="DNASU" id="16664"/>
<dbReference type="Ensembl" id="ENSMUST00000007272.8">
    <property type="protein sequence ID" value="ENSMUSP00000007272.8"/>
    <property type="gene ID" value="ENSMUSG00000045545.9"/>
</dbReference>
<dbReference type="GeneID" id="16664"/>
<dbReference type="KEGG" id="mmu:16664"/>
<dbReference type="UCSC" id="uc007lko.1">
    <property type="organism name" value="mouse"/>
</dbReference>
<dbReference type="AGR" id="MGI:96688"/>
<dbReference type="CTD" id="3861"/>
<dbReference type="MGI" id="MGI:96688">
    <property type="gene designation" value="Krt14"/>
</dbReference>
<dbReference type="VEuPathDB" id="HostDB:ENSMUSG00000045545"/>
<dbReference type="eggNOG" id="ENOG502R8V7">
    <property type="taxonomic scope" value="Eukaryota"/>
</dbReference>
<dbReference type="GeneTree" id="ENSGT00940000154602"/>
<dbReference type="HOGENOM" id="CLU_012560_8_1_1"/>
<dbReference type="InParanoid" id="Q61781"/>
<dbReference type="OMA" id="PTEMKDY"/>
<dbReference type="OrthoDB" id="2441647at2759"/>
<dbReference type="PhylomeDB" id="Q61781"/>
<dbReference type="TreeFam" id="TF332742"/>
<dbReference type="Reactome" id="R-MMU-446107">
    <property type="pathway name" value="Type I hemidesmosome assembly"/>
</dbReference>
<dbReference type="Reactome" id="R-MMU-6805567">
    <property type="pathway name" value="Keratinization"/>
</dbReference>
<dbReference type="Reactome" id="R-MMU-6809371">
    <property type="pathway name" value="Formation of the cornified envelope"/>
</dbReference>
<dbReference type="BioGRID-ORCS" id="16664">
    <property type="hits" value="2 hits in 78 CRISPR screens"/>
</dbReference>
<dbReference type="PRO" id="PR:Q61781"/>
<dbReference type="Proteomes" id="UP000000589">
    <property type="component" value="Chromosome 11"/>
</dbReference>
<dbReference type="RNAct" id="Q61781">
    <property type="molecule type" value="protein"/>
</dbReference>
<dbReference type="Bgee" id="ENSMUSG00000045545">
    <property type="expression patterns" value="Expressed in tail skin and 115 other cell types or tissues"/>
</dbReference>
<dbReference type="GO" id="GO:0045178">
    <property type="term" value="C:basal part of cell"/>
    <property type="evidence" value="ECO:0000314"/>
    <property type="project" value="UniProtKB"/>
</dbReference>
<dbReference type="GO" id="GO:0071944">
    <property type="term" value="C:cell periphery"/>
    <property type="evidence" value="ECO:0000314"/>
    <property type="project" value="MGI"/>
</dbReference>
<dbReference type="GO" id="GO:0001533">
    <property type="term" value="C:cornified envelope"/>
    <property type="evidence" value="ECO:0000314"/>
    <property type="project" value="MGI"/>
</dbReference>
<dbReference type="GO" id="GO:0005737">
    <property type="term" value="C:cytoplasm"/>
    <property type="evidence" value="ECO:0000250"/>
    <property type="project" value="UniProtKB"/>
</dbReference>
<dbReference type="GO" id="GO:0045095">
    <property type="term" value="C:keratin filament"/>
    <property type="evidence" value="ECO:0000314"/>
    <property type="project" value="MGI"/>
</dbReference>
<dbReference type="GO" id="GO:0005634">
    <property type="term" value="C:nucleus"/>
    <property type="evidence" value="ECO:0000250"/>
    <property type="project" value="UniProtKB"/>
</dbReference>
<dbReference type="GO" id="GO:1990254">
    <property type="term" value="F:keratin filament binding"/>
    <property type="evidence" value="ECO:0007669"/>
    <property type="project" value="Ensembl"/>
</dbReference>
<dbReference type="GO" id="GO:0005198">
    <property type="term" value="F:structural molecule activity"/>
    <property type="evidence" value="ECO:0007669"/>
    <property type="project" value="InterPro"/>
</dbReference>
<dbReference type="GO" id="GO:0042633">
    <property type="term" value="P:hair cycle"/>
    <property type="evidence" value="ECO:0007669"/>
    <property type="project" value="Ensembl"/>
</dbReference>
<dbReference type="GO" id="GO:0045110">
    <property type="term" value="P:intermediate filament bundle assembly"/>
    <property type="evidence" value="ECO:0000250"/>
    <property type="project" value="UniProtKB"/>
</dbReference>
<dbReference type="GO" id="GO:0030216">
    <property type="term" value="P:keratinocyte differentiation"/>
    <property type="evidence" value="ECO:0000314"/>
    <property type="project" value="MGI"/>
</dbReference>
<dbReference type="GO" id="GO:0009314">
    <property type="term" value="P:response to radiation"/>
    <property type="evidence" value="ECO:0000314"/>
    <property type="project" value="MGI"/>
</dbReference>
<dbReference type="GO" id="GO:0048863">
    <property type="term" value="P:stem cell differentiation"/>
    <property type="evidence" value="ECO:0000314"/>
    <property type="project" value="MGI"/>
</dbReference>
<dbReference type="FunFam" id="1.20.5.1160:FF:000002">
    <property type="entry name" value="Type I keratin 10"/>
    <property type="match status" value="1"/>
</dbReference>
<dbReference type="FunFam" id="1.20.5.170:FF:000002">
    <property type="entry name" value="Type I keratin KA11"/>
    <property type="match status" value="1"/>
</dbReference>
<dbReference type="FunFam" id="1.20.5.500:FF:000001">
    <property type="entry name" value="Type II keratin 23"/>
    <property type="match status" value="1"/>
</dbReference>
<dbReference type="Gene3D" id="1.20.5.170">
    <property type="match status" value="1"/>
</dbReference>
<dbReference type="Gene3D" id="1.20.5.500">
    <property type="entry name" value="Single helix bin"/>
    <property type="match status" value="1"/>
</dbReference>
<dbReference type="Gene3D" id="1.20.5.1160">
    <property type="entry name" value="Vasodilator-stimulated phosphoprotein"/>
    <property type="match status" value="1"/>
</dbReference>
<dbReference type="InterPro" id="IPR018039">
    <property type="entry name" value="IF_conserved"/>
</dbReference>
<dbReference type="InterPro" id="IPR039008">
    <property type="entry name" value="IF_rod_dom"/>
</dbReference>
<dbReference type="InterPro" id="IPR002957">
    <property type="entry name" value="Keratin_I"/>
</dbReference>
<dbReference type="PANTHER" id="PTHR23239">
    <property type="entry name" value="INTERMEDIATE FILAMENT"/>
    <property type="match status" value="1"/>
</dbReference>
<dbReference type="PANTHER" id="PTHR23239:SF368">
    <property type="entry name" value="KERATIN, TYPE I CYTOSKELETAL 14"/>
    <property type="match status" value="1"/>
</dbReference>
<dbReference type="Pfam" id="PF00038">
    <property type="entry name" value="Filament"/>
    <property type="match status" value="1"/>
</dbReference>
<dbReference type="PRINTS" id="PR01248">
    <property type="entry name" value="TYPE1KERATIN"/>
</dbReference>
<dbReference type="SMART" id="SM01391">
    <property type="entry name" value="Filament"/>
    <property type="match status" value="1"/>
</dbReference>
<dbReference type="SUPFAM" id="SSF64593">
    <property type="entry name" value="Intermediate filament protein, coiled coil region"/>
    <property type="match status" value="2"/>
</dbReference>
<dbReference type="SUPFAM" id="SSF46579">
    <property type="entry name" value="Prefoldin"/>
    <property type="match status" value="1"/>
</dbReference>
<dbReference type="PROSITE" id="PS00226">
    <property type="entry name" value="IF_ROD_1"/>
    <property type="match status" value="1"/>
</dbReference>
<dbReference type="PROSITE" id="PS51842">
    <property type="entry name" value="IF_ROD_2"/>
    <property type="match status" value="1"/>
</dbReference>
<name>K1C14_MOUSE</name>
<reference key="1">
    <citation type="journal article" date="2009" name="PLoS Biol.">
        <title>Lineage-specific biology revealed by a finished genome assembly of the mouse.</title>
        <authorList>
            <person name="Church D.M."/>
            <person name="Goodstadt L."/>
            <person name="Hillier L.W."/>
            <person name="Zody M.C."/>
            <person name="Goldstein S."/>
            <person name="She X."/>
            <person name="Bult C.J."/>
            <person name="Agarwala R."/>
            <person name="Cherry J.L."/>
            <person name="DiCuccio M."/>
            <person name="Hlavina W."/>
            <person name="Kapustin Y."/>
            <person name="Meric P."/>
            <person name="Maglott D."/>
            <person name="Birtle Z."/>
            <person name="Marques A.C."/>
            <person name="Graves T."/>
            <person name="Zhou S."/>
            <person name="Teague B."/>
            <person name="Potamousis K."/>
            <person name="Churas C."/>
            <person name="Place M."/>
            <person name="Herschleb J."/>
            <person name="Runnheim R."/>
            <person name="Forrest D."/>
            <person name="Amos-Landgraf J."/>
            <person name="Schwartz D.C."/>
            <person name="Cheng Z."/>
            <person name="Lindblad-Toh K."/>
            <person name="Eichler E.E."/>
            <person name="Ponting C.P."/>
        </authorList>
    </citation>
    <scope>NUCLEOTIDE SEQUENCE [LARGE SCALE GENOMIC DNA]</scope>
    <source>
        <strain>C57BL/6J</strain>
    </source>
</reference>
<reference key="2">
    <citation type="journal article" date="2010" name="Cell">
        <title>A tissue-specific atlas of mouse protein phosphorylation and expression.</title>
        <authorList>
            <person name="Huttlin E.L."/>
            <person name="Jedrychowski M.P."/>
            <person name="Elias J.E."/>
            <person name="Goswami T."/>
            <person name="Rad R."/>
            <person name="Beausoleil S.A."/>
            <person name="Villen J."/>
            <person name="Haas W."/>
            <person name="Sowa M.E."/>
            <person name="Gygi S.P."/>
        </authorList>
    </citation>
    <scope>PHOSPHORYLATION [LARGE SCALE ANALYSIS] AT SER-447</scope>
    <scope>IDENTIFICATION BY MASS SPECTROMETRY [LARGE SCALE ANALYSIS]</scope>
    <source>
        <tissue>Brain</tissue>
        <tissue>Brown adipose tissue</tissue>
        <tissue>Heart</tissue>
        <tissue>Liver</tissue>
        <tissue>Lung</tissue>
        <tissue>Pancreas</tissue>
    </source>
</reference>
<reference key="3">
    <citation type="journal article" date="2012" name="Nat. Struct. Mol. Biol.">
        <title>Structural basis for heteromeric assembly and perinuclear organization of keratin filaments.</title>
        <authorList>
            <person name="Lee C.H."/>
            <person name="Kim M.S."/>
            <person name="Chung B.M."/>
            <person name="Leahy D.J."/>
            <person name="Coulombe P.A."/>
        </authorList>
    </citation>
    <scope>SUBUNIT</scope>
    <scope>DISULFIDE BOND</scope>
</reference>
<reference key="4">
    <citation type="journal article" date="2004" name="Genome Res.">
        <title>The status, quality, and expansion of the NIH full-length cDNA project: the Mammalian Gene Collection (MGC).</title>
        <authorList>
            <consortium name="The MGC Project Team"/>
        </authorList>
    </citation>
    <scope>NUCLEOTIDE SEQUENCE [LARGE SCALE MRNA]</scope>
    <source>
        <strain>FVB/N</strain>
        <tissue>Mammary tumor</tissue>
    </source>
</reference>
<reference key="5">
    <citation type="submission" date="2009-01" db="UniProtKB">
        <authorList>
            <person name="Lubec G."/>
            <person name="Sunyer B."/>
            <person name="Chen W.-Q."/>
        </authorList>
    </citation>
    <scope>PROTEIN SEQUENCE OF 123-131; 201-207; 218-228; 322-334 AND 414-422</scope>
    <scope>IDENTIFICATION BY MASS SPECTROMETRY</scope>
    <source>
        <strain>OF1</strain>
        <tissue>Hippocampus</tissue>
    </source>
</reference>
<reference key="6">
    <citation type="journal article" date="1987" name="J. Biol. Chem.">
        <title>Three cDNA sequences of mouse type I keratins: cellular localization of the mRNAs in normal and hyperproliferative tissues.</title>
        <authorList>
            <person name="Knapp B."/>
            <person name="Rentrop M."/>
            <person name="Schweizer J."/>
            <person name="Winter H."/>
        </authorList>
    </citation>
    <scope>NUCLEOTIDE SEQUENCE [MRNA] OF 126-484</scope>
    <scope>TISSUE SPECIFICITY</scope>
    <scope>DEVELOPMENTAL STAGE</scope>
</reference>
<reference key="7">
    <citation type="journal article" date="2001" name="Mol. Biol. Cell">
        <title>Complete cytolysis and neonatal lethality in keratin 5 knockout mice reveal its fundamental role in skin integrity and in epidermolysis bullosa simplex.</title>
        <authorList>
            <person name="Peters B."/>
            <person name="Kirfel J."/>
            <person name="Bussow H."/>
            <person name="Vidal M."/>
            <person name="Magin T.M."/>
        </authorList>
    </citation>
    <scope>IDENTIFICATION IN A COMPLEX WITH KRT5</scope>
    <scope>INTERACTION WITH KRT5</scope>
    <scope>TISSUE SPECIFICITY</scope>
</reference>
<reference key="8">
    <citation type="journal article" date="2003" name="J. Biol. Chem.">
        <title>Amelogenin interacts with cytokeratin-5 in ameloblasts during enamel growth.</title>
        <authorList>
            <person name="Ravindranath R.M."/>
            <person name="Basilrose R.M. Sr."/>
            <person name="Ravindranath N.H."/>
            <person name="Vaitheesvaran B."/>
        </authorList>
    </citation>
    <scope>DEVELOPMENTAL STAGE</scope>
</reference>
<reference key="9">
    <citation type="journal article" date="2006" name="Genes Dev.">
        <title>Keratin 17 modulates hair follicle cycling in a TNFalpha-dependent fashion.</title>
        <authorList>
            <person name="Tong X."/>
            <person name="Coulombe P.A."/>
        </authorList>
    </citation>
    <scope>INTERACTION WITH TRADD</scope>
</reference>
<reference key="10">
    <citation type="journal article" date="2008" name="J. Cell Sci.">
        <title>Stress-induced recruitment of epiplakin to keratin networks increases their resistance to hyperphosphorylation-induced disruption.</title>
        <authorList>
            <person name="Spazierer D."/>
            <person name="Raberger J."/>
            <person name="Gross K."/>
            <person name="Fuchs P."/>
            <person name="Wiche G."/>
        </authorList>
    </citation>
    <scope>INTERACTION WITH EPPK1</scope>
</reference>
<reference key="11">
    <citation type="journal article" date="2009" name="Hum. Mutat.">
        <title>Cytokines as genetic modifiers in K5-/- mice and in human epidermolysis bullosa simplex.</title>
        <authorList>
            <person name="Roth W."/>
            <person name="Reuter U."/>
            <person name="Wohlenberg C."/>
            <person name="Bruckner-Tuderman L."/>
            <person name="Magin T.M."/>
        </authorList>
    </citation>
    <scope>DISRUPTION PHENOTYPE</scope>
</reference>
<reference key="12">
    <citation type="journal article" date="2014" name="J. Invest. Dermatol.">
        <title>Interaction of plectin with keratins 5 and 14: dependence on several plectin domains and keratin quaternary structure.</title>
        <authorList>
            <person name="Bouameur J.E."/>
            <person name="Favre B."/>
            <person name="Fontao L."/>
            <person name="Lingasamy P."/>
            <person name="Begre N."/>
            <person name="Borradori L."/>
        </authorList>
    </citation>
    <scope>IDENTIFICATION IN A COMPLEX WITH KRT5</scope>
    <scope>INTERACTION WITH KRT5 AND PLEC</scope>
</reference>
<reference key="13">
    <citation type="journal article" date="2016" name="Hum. Mol. Genet.">
        <title>Keratin 12 missense mutation induces the unfolded protein response and apoptosis in Meesmann epithelial corneal dystrophy.</title>
        <authorList>
            <person name="Allen E.H."/>
            <person name="Courtney D.G."/>
            <person name="Atkinson S.D."/>
            <person name="Moore J.E."/>
            <person name="Mairs L."/>
            <person name="Poulsen E.T."/>
            <person name="Schiroli D."/>
            <person name="Maurizi E."/>
            <person name="Cole C."/>
            <person name="Hickerson R.P."/>
            <person name="James J."/>
            <person name="Murgatroyd H."/>
            <person name="Smith F.J."/>
            <person name="MacEwen C."/>
            <person name="Enghild J.J."/>
            <person name="Nesbit M.A."/>
            <person name="Leslie Pedrioli D.M."/>
            <person name="McLean W.H."/>
            <person name="Moore C.B."/>
        </authorList>
    </citation>
    <scope>TISSUE SPECIFICITY</scope>
</reference>
<reference key="14">
    <citation type="journal article" date="2016" name="J. Invest. Dermatol.">
        <title>Growth Retardation, Loss of Desmosomal Adhesion, and Impaired Tight Junction Function Identify a Unique Role of Plakophilin 1 In Vivo.</title>
        <authorList>
            <person name="Rietscher K."/>
            <person name="Wolf A."/>
            <person name="Hause G."/>
            <person name="Rother A."/>
            <person name="Keil R."/>
            <person name="Magin T.M."/>
            <person name="Glass M."/>
            <person name="Niessen C.M."/>
            <person name="Hatzfeld M."/>
        </authorList>
    </citation>
    <scope>DEVELOPMENTAL STAGE</scope>
</reference>
<sequence>MATCSRQFTSSSSMKGSCGIGGGSSRMSSILAGGSCRAPSTYGGMSVTSSRFSSGGACGIGGGYGGSFSSSSFGGGLGSGFGGRFDGFGGGFGGGLGGGFGGGLGGGLGGGIGDGLLVGSEKVTMQNLNDRLATYLDKVRALEEANTELEVKIRDWYQRQRPTEIKDYSPYFKTIEDLKSKILAATVDNANVLLQIDNARLAADDFRTKFETEQSLRMSVEADINGLRRVLDELTLARADLEMQIESLKEELAYLKKNHEEEMASMRGQVGGDVNVEMDAAPGVDLSRILNEMRDQYEKMAEKNRKDAEEWFFSKTEELNREVATNSELVQSGKSEISELRRTMQNLEIELQSQLSMKASLENNLEETKGRYCMQLAQIQEMIGSVEEQLAQLRCEMEQQNQEYKILLDVKTRLEQEIATYRRLLEGEDAHLSSSQFSSSSQFSSGSQSSRDVTSTNRQIRTKVMDVHDGKVVSTHEQVLRTKN</sequence>
<comment type="function">
    <text evidence="2">The nonhelical tail domain is involved in promoting KRT5-KRT14 filaments to self-organize into large bundles and enhances the mechanical properties involved in resilience of keratin intermediate filaments in vitro.</text>
</comment>
<comment type="subunit">
    <text evidence="2 5 7 8 10 12">Heterotetramer of two type I and two type II keratins (PubMed:22705788). Forms a disulfide-linked heterodimer (via 2B domains) with KRT5 (via 2B domains) (PubMed:22705788, PubMed:24940650). Forms a heterodimer with KRT1; the interaction is more abundant in the absence of KRT5 (PubMed:11408584). Interacts with PLEC isoform 1C, when in a heterodimer with KRT5 (PubMed:24940650). Interacts with TRADD and with keratin filaments (PubMed:16702408). Associates with other type I keratins (By similarity). Interacts with EPPK1 (PubMed:18285451). Interacts with KLHL24 (By similarity). Interacts with PKP1 (via N-terminus) and PKP2 (By similarity).</text>
</comment>
<comment type="subcellular location">
    <subcellularLocation>
        <location evidence="2">Cytoplasm</location>
    </subcellularLocation>
    <subcellularLocation>
        <location evidence="2">Nucleus</location>
    </subcellularLocation>
    <text evidence="2">Expressed in both as a filamentous pattern.</text>
</comment>
<comment type="tissue specificity">
    <text evidence="5 11 13">Expressed in the corneal epithelium (at protein level) (PubMed:26758872). Expressed in the basal layer of the epidermis and the outer root sheath of hair follicles (at protein level) (PubMed:11408584). Expressed in the epithelial basal layer in the tail epidermis (PubMed:2433272). Expressed in the parabasal cell row, basal cell layer, and suprabasal epithelial layer of the tongue (PubMed:2433272).</text>
</comment>
<comment type="developmental stage">
    <text evidence="6 11 14">Expressed in the epithelial cells of the tongue and palate at 17 dpc (PubMed:2433272). Expressed in keratinocytes of newborn mice (at protein level) (PubMed:27033150). Expressed in ameloblasts at the periphery and at the incisal region of mandibular molars at P3 (PubMed:12657653). Expressed at the Tomes' processes of ameloblasts at the incisal region at P5 (PubMed:12657653). Expression at the incisal region decreased at P7 and P9 (PubMed:12657653).</text>
</comment>
<comment type="PTM">
    <text evidence="10">A disulfide bond is formed between rather than within filaments and promotes the formation of a keratin filament cage around the nucleus.</text>
</comment>
<comment type="PTM">
    <text evidence="2">Ubiquitinated by the BCR(KLHL24) E3 ubiquitin ligase complex.</text>
</comment>
<comment type="disruption phenotype">
    <text evidence="9">Increase in CXCL16 abundance in the epidermis at 2 days of age.</text>
</comment>
<comment type="miscellaneous">
    <text>There are two types of cytoskeletal and microfibrillar keratin: I (acidic; 40-55 kDa) and II (neutral to basic; 56-70 kDa).</text>
</comment>
<comment type="similarity">
    <text evidence="3">Belongs to the intermediate filament family.</text>
</comment>
<comment type="sequence caution" evidence="15">
    <conflict type="erroneous initiation">
        <sequence resource="EMBL-CDS" id="AAH03325"/>
    </conflict>
</comment>
<accession>Q61781</accession>
<accession>A2A4G4</accession>
<accession>Q91VQ4</accession>
<accession>Q99LE0</accession>